<reference key="1">
    <citation type="journal article" date="1989" name="J. Bacteriol.">
        <title>Physical and genetic map of the major nif gene cluster from Azotobacter vinelandii.</title>
        <authorList>
            <person name="Jacobson M.R."/>
            <person name="Brigle K.E."/>
            <person name="Bennett L.T."/>
            <person name="Setterquist R.A."/>
            <person name="Wilson M.S."/>
            <person name="Cash V.L."/>
            <person name="Beynon J."/>
            <person name="Newton W.E."/>
            <person name="Dean D.R."/>
        </authorList>
    </citation>
    <scope>NUCLEOTIDE SEQUENCE [GENOMIC DNA]</scope>
    <source>
        <strain>ATCC 13705 / OP1 / DSM 366 / NCIMB 11614 / LMG 3878 / UW</strain>
    </source>
</reference>
<reference key="2">
    <citation type="journal article" date="1985" name="Gene">
        <title>Complete nucleotide sequence of the Azotobacter vinelandii nitrogenase structural gene cluster.</title>
        <authorList>
            <person name="Brigle K.E."/>
            <person name="Newton W.E."/>
            <person name="Dean D.R."/>
        </authorList>
    </citation>
    <scope>NUCLEOTIDE SEQUENCE [GENOMIC DNA]</scope>
    <source>
        <strain>ATCC 13705 / OP1 / DSM 366 / NCIMB 11614 / LMG 3878 / UW</strain>
    </source>
</reference>
<reference key="3">
    <citation type="journal article" date="1978" name="J. Biol. Chem.">
        <title>Isolation and partial characterization of two different subunits from the molybdenum-iron protein of Azotobacter vinelandii nitrogenase.</title>
        <authorList>
            <person name="Lundell D.J."/>
            <person name="Howard J.B."/>
        </authorList>
    </citation>
    <scope>PROTEIN SEQUENCE OF 2-20 AND 521-523</scope>
</reference>
<reference key="4">
    <citation type="journal article" date="1994" name="Mol. Microbiol.">
        <title>The FeSII protein of Azotobacter vinelandii is not essential for aerobic nitrogen fixation, but confers significant protection to oxygen-mediated inactivation of nitrogenase in vitro and in vivo.</title>
        <authorList>
            <person name="Moshiri F."/>
            <person name="Kim J.W."/>
            <person name="Fu C."/>
            <person name="Maier R.J."/>
        </authorList>
    </citation>
    <scope>ACTIVITY REGULATION</scope>
    <scope>INDUCTION</scope>
    <source>
        <strain>CA</strain>
    </source>
</reference>
<reference key="5">
    <citation type="journal article" date="1992" name="Nature">
        <title>Crystallographic structure and functional implications of the nitrogenase molybdenum-iron protein from Azotobacter vinelandii.</title>
        <authorList>
            <person name="Kim J."/>
            <person name="Rees D.C."/>
        </authorList>
    </citation>
    <scope>X-RAY CRYSTALLOGRAPHY (2.7 ANGSTROMS)</scope>
</reference>
<reference key="6">
    <citation type="journal article" date="1997" name="Nature">
        <title>Structure of ADP x [AlF(4)](-)-stabilized nitrogenase complex and its implications for signal transduction.</title>
        <authorList>
            <person name="Schindelin H."/>
            <person name="Kisker C."/>
            <person name="Schlessman J.L."/>
            <person name="Howard J.B."/>
            <person name="Rees D.C."/>
        </authorList>
    </citation>
    <scope>X-RAY CRYSTALLOGRAPHY (3.0 ANGSTROMS)</scope>
</reference>
<reference key="7">
    <citation type="journal article" date="1997" name="Biochemistry">
        <title>Redox-dependent structural changes in the nitrogenase P-cluster.</title>
        <authorList>
            <person name="Peters J.W."/>
            <person name="Stowell M.H.B."/>
            <person name="Soltis S.M."/>
            <person name="Finnegan M.G."/>
            <person name="Johnson M.K."/>
            <person name="Rees D.C."/>
        </authorList>
    </citation>
    <scope>X-RAY CRYSTALLOGRAPHY (2.0 ANGSTROMS)</scope>
</reference>
<reference key="8">
    <citation type="journal article" date="2001" name="Biochemistry">
        <title>MgATP-bound and nucleotide-free structures of a nitrogenase protein complex between the Leu 127Delta-Fe-protein and the MoFe-protein.</title>
        <authorList>
            <person name="Chiu H.-J."/>
            <person name="Peters J.W."/>
            <person name="Lanzilotta W.N."/>
            <person name="Ryle M.J."/>
            <person name="Seefeldt L.C."/>
            <person name="Howard J.B."/>
            <person name="Rees D.C."/>
        </authorList>
    </citation>
    <scope>X-RAY CRYSTALLOGRAPHY (2.2 ANGSTROMS)</scope>
</reference>
<reference key="9">
    <citation type="journal article" date="2001" name="Biochemistry">
        <title>Mechanistic features and structure of the nitrogenase alpha-Gln195 MoFe protein.</title>
        <authorList>
            <person name="Soerlie M."/>
            <person name="Christiansen J."/>
            <person name="Lemon B.J."/>
            <person name="Peters J.W."/>
            <person name="Dean D.R."/>
            <person name="Hales B.J."/>
        </authorList>
    </citation>
    <scope>X-RAY CRYSTALLOGRAPHY (2.5 ANGSTROMS) OF MUTANT GLN-195</scope>
</reference>
<reference key="10">
    <citation type="journal article" date="2002" name="Biochemistry">
        <title>Biochemical and structural characterization of the cross-linked complex of nitrogenase: comparison to the ADP-AlF4(-)-stabilized structure.</title>
        <authorList>
            <person name="Schmid B."/>
            <person name="Einsle O."/>
            <person name="Chiu H.J."/>
            <person name="Willing A."/>
            <person name="Yoshida M."/>
            <person name="Howard J.B."/>
            <person name="Rees D.C."/>
        </authorList>
    </citation>
    <scope>X-RAY CRYSTALLOGRAPHY (2.3 ANGSTROMS) OF CROSS-LINKED HETERODIMER WITH FE-PROTEIN</scope>
</reference>
<reference key="11">
    <citation type="journal article" date="2002" name="Science">
        <title>Structure of a cofactor-deficient nitrogenase MoFe protein.</title>
        <authorList>
            <person name="Schmid B."/>
            <person name="Ribbe M.W."/>
            <person name="Einsle O."/>
            <person name="Yoshida M."/>
            <person name="Thomas L.M."/>
            <person name="Dean D.R."/>
            <person name="Rees D.C."/>
            <person name="Burgess B.K."/>
        </authorList>
    </citation>
    <scope>X-RAY CRYSTALLOGRAPHY (2.3 ANGSTROMS)</scope>
</reference>
<reference key="12">
    <citation type="journal article" date="2002" name="Science">
        <title>Nitrogenase MoFe-protein at 1.16 A resolution: a central ligand in the FeMo-cofactor.</title>
        <authorList>
            <person name="Einsle O."/>
            <person name="Tezcan F.A."/>
            <person name="Andrade S.L.A."/>
            <person name="Schmid B."/>
            <person name="Yoshida M."/>
            <person name="Howard J.B."/>
            <person name="Rees D.C."/>
        </authorList>
    </citation>
    <scope>X-RAY CRYSTALLOGRAPHY (1.16 ANGSTROMS)</scope>
</reference>
<protein>
    <recommendedName>
        <fullName>Nitrogenase molybdenum-iron protein beta chain</fullName>
        <ecNumber>1.18.6.1</ecNumber>
    </recommendedName>
    <alternativeName>
        <fullName>Dinitrogenase</fullName>
    </alternativeName>
    <alternativeName>
        <fullName>Nitrogenase component I</fullName>
    </alternativeName>
</protein>
<accession>P07329</accession>
<feature type="initiator methionine" description="Removed" evidence="1">
    <location>
        <position position="1"/>
    </location>
</feature>
<feature type="chain" id="PRO_0000153091" description="Nitrogenase molybdenum-iron protein beta chain">
    <location>
        <begin position="2"/>
        <end position="523"/>
    </location>
</feature>
<feature type="binding site">
    <location>
        <position position="70"/>
    </location>
    <ligand>
        <name>[8Fe-7S] cluster</name>
        <dbReference type="ChEBI" id="CHEBI:21143"/>
        <note>ligand shared with alpha chain</note>
    </ligand>
</feature>
<feature type="binding site">
    <location>
        <position position="95"/>
    </location>
    <ligand>
        <name>[8Fe-7S] cluster</name>
        <dbReference type="ChEBI" id="CHEBI:21143"/>
        <note>ligand shared with alpha chain</note>
    </ligand>
</feature>
<feature type="binding site">
    <location>
        <position position="153"/>
    </location>
    <ligand>
        <name>[8Fe-7S] cluster</name>
        <dbReference type="ChEBI" id="CHEBI:21143"/>
        <note>ligand shared with alpha chain</note>
    </ligand>
</feature>
<feature type="binding site">
    <location>
        <position position="188"/>
    </location>
    <ligand>
        <name>[8Fe-7S] cluster</name>
        <dbReference type="ChEBI" id="CHEBI:21143"/>
        <note>ligand shared with alpha chain</note>
    </ligand>
</feature>
<feature type="sequence conflict" description="In Ref. 2; AAA22144." evidence="3" ref="2">
    <original>F</original>
    <variation>L</variation>
    <location>
        <position position="103"/>
    </location>
</feature>
<feature type="strand" evidence="8">
    <location>
        <begin position="5"/>
        <end position="7"/>
    </location>
</feature>
<feature type="helix" evidence="6">
    <location>
        <begin position="11"/>
        <end position="14"/>
    </location>
</feature>
<feature type="helix" evidence="6">
    <location>
        <begin position="18"/>
        <end position="31"/>
    </location>
</feature>
<feature type="helix" evidence="6">
    <location>
        <begin position="37"/>
        <end position="46"/>
    </location>
</feature>
<feature type="helix" evidence="6">
    <location>
        <begin position="50"/>
        <end position="57"/>
    </location>
</feature>
<feature type="strand" evidence="6">
    <location>
        <begin position="63"/>
        <end position="65"/>
    </location>
</feature>
<feature type="helix" evidence="6">
    <location>
        <begin position="71"/>
        <end position="80"/>
    </location>
</feature>
<feature type="strand" evidence="6">
    <location>
        <begin position="85"/>
        <end position="91"/>
    </location>
</feature>
<feature type="helix" evidence="6">
    <location>
        <begin position="93"/>
        <end position="107"/>
    </location>
</feature>
<feature type="strand" evidence="4">
    <location>
        <begin position="114"/>
        <end position="117"/>
    </location>
</feature>
<feature type="helix" evidence="6">
    <location>
        <begin position="120"/>
        <end position="123"/>
    </location>
</feature>
<feature type="helix" evidence="6">
    <location>
        <begin position="128"/>
        <end position="142"/>
    </location>
</feature>
<feature type="strand" evidence="6">
    <location>
        <begin position="145"/>
        <end position="151"/>
    </location>
</feature>
<feature type="helix" evidence="6">
    <location>
        <begin position="153"/>
        <end position="158"/>
    </location>
</feature>
<feature type="helix" evidence="6">
    <location>
        <begin position="162"/>
        <end position="171"/>
    </location>
</feature>
<feature type="strand" evidence="9">
    <location>
        <begin position="177"/>
        <end position="179"/>
    </location>
</feature>
<feature type="strand" evidence="5">
    <location>
        <begin position="188"/>
        <end position="191"/>
    </location>
</feature>
<feature type="helix" evidence="6">
    <location>
        <begin position="193"/>
        <end position="209"/>
    </location>
</feature>
<feature type="helix" evidence="6">
    <location>
        <begin position="210"/>
        <end position="215"/>
    </location>
</feature>
<feature type="turn" evidence="6">
    <location>
        <begin position="218"/>
        <end position="221"/>
    </location>
</feature>
<feature type="strand" evidence="6">
    <location>
        <begin position="224"/>
        <end position="227"/>
    </location>
</feature>
<feature type="helix" evidence="6">
    <location>
        <begin position="234"/>
        <end position="246"/>
    </location>
</feature>
<feature type="strand" evidence="6">
    <location>
        <begin position="251"/>
        <end position="255"/>
    </location>
</feature>
<feature type="turn" evidence="6">
    <location>
        <begin position="258"/>
        <end position="261"/>
    </location>
</feature>
<feature type="strand" evidence="7">
    <location>
        <begin position="266"/>
        <end position="268"/>
    </location>
</feature>
<feature type="helix" evidence="6">
    <location>
        <begin position="278"/>
        <end position="283"/>
    </location>
</feature>
<feature type="helix" evidence="6">
    <location>
        <begin position="284"/>
        <end position="286"/>
    </location>
</feature>
<feature type="strand" evidence="6">
    <location>
        <begin position="287"/>
        <end position="294"/>
    </location>
</feature>
<feature type="helix" evidence="6">
    <location>
        <begin position="295"/>
        <end position="297"/>
    </location>
</feature>
<feature type="helix" evidence="6">
    <location>
        <begin position="299"/>
        <end position="307"/>
    </location>
</feature>
<feature type="helix" evidence="6">
    <location>
        <begin position="321"/>
        <end position="336"/>
    </location>
</feature>
<feature type="helix" evidence="6">
    <location>
        <begin position="342"/>
        <end position="362"/>
    </location>
</feature>
<feature type="strand" evidence="6">
    <location>
        <begin position="366"/>
        <end position="370"/>
    </location>
</feature>
<feature type="helix" evidence="6">
    <location>
        <begin position="373"/>
        <end position="385"/>
    </location>
</feature>
<feature type="strand" evidence="6">
    <location>
        <begin position="389"/>
        <end position="395"/>
    </location>
</feature>
<feature type="helix" evidence="6">
    <location>
        <begin position="400"/>
        <end position="411"/>
    </location>
</feature>
<feature type="helix" evidence="6">
    <location>
        <begin position="414"/>
        <end position="416"/>
    </location>
</feature>
<feature type="strand" evidence="6">
    <location>
        <begin position="420"/>
        <end position="424"/>
    </location>
</feature>
<feature type="helix" evidence="6">
    <location>
        <begin position="427"/>
        <end position="436"/>
    </location>
</feature>
<feature type="strand" evidence="6">
    <location>
        <begin position="440"/>
        <end position="444"/>
    </location>
</feature>
<feature type="helix" evidence="6">
    <location>
        <begin position="448"/>
        <end position="458"/>
    </location>
</feature>
<feature type="helix" evidence="6">
    <location>
        <begin position="460"/>
        <end position="462"/>
    </location>
</feature>
<feature type="strand" evidence="6">
    <location>
        <begin position="466"/>
        <end position="468"/>
    </location>
</feature>
<feature type="strand" evidence="6">
    <location>
        <begin position="475"/>
        <end position="478"/>
    </location>
</feature>
<feature type="helix" evidence="6">
    <location>
        <begin position="479"/>
        <end position="481"/>
    </location>
</feature>
<feature type="helix" evidence="6">
    <location>
        <begin position="486"/>
        <end position="508"/>
    </location>
</feature>
<feature type="turn" evidence="6">
    <location>
        <begin position="512"/>
        <end position="515"/>
    </location>
</feature>
<feature type="helix" evidence="6">
    <location>
        <begin position="516"/>
        <end position="518"/>
    </location>
</feature>
<evidence type="ECO:0000269" key="1">
    <source>
    </source>
</evidence>
<evidence type="ECO:0000269" key="2">
    <source>
    </source>
</evidence>
<evidence type="ECO:0000305" key="3"/>
<evidence type="ECO:0007829" key="4">
    <source>
        <dbReference type="PDB" id="1G21"/>
    </source>
</evidence>
<evidence type="ECO:0007829" key="5">
    <source>
        <dbReference type="PDB" id="2AFI"/>
    </source>
</evidence>
<evidence type="ECO:0007829" key="6">
    <source>
        <dbReference type="PDB" id="3U7Q"/>
    </source>
</evidence>
<evidence type="ECO:0007829" key="7">
    <source>
        <dbReference type="PDB" id="6O7M"/>
    </source>
</evidence>
<evidence type="ECO:0007829" key="8">
    <source>
        <dbReference type="PDB" id="8DBX"/>
    </source>
</evidence>
<evidence type="ECO:0007829" key="9">
    <source>
        <dbReference type="PDB" id="8E3U"/>
    </source>
</evidence>
<proteinExistence type="evidence at protein level"/>
<name>NIFK_AZOVI</name>
<gene>
    <name type="primary">nifK</name>
</gene>
<organism>
    <name type="scientific">Azotobacter vinelandii</name>
    <dbReference type="NCBI Taxonomy" id="354"/>
    <lineage>
        <taxon>Bacteria</taxon>
        <taxon>Pseudomonadati</taxon>
        <taxon>Pseudomonadota</taxon>
        <taxon>Gammaproteobacteria</taxon>
        <taxon>Pseudomonadales</taxon>
        <taxon>Pseudomonadaceae</taxon>
        <taxon>Azotobacter</taxon>
    </lineage>
</organism>
<comment type="function">
    <text>This molybdenum-iron protein is part of the nitrogenase complex that catalyzes the key enzymatic reactions in nitrogen fixation.</text>
</comment>
<comment type="catalytic activity">
    <reaction>
        <text>N2 + 8 reduced [2Fe-2S]-[ferredoxin] + 16 ATP + 16 H2O = H2 + 8 oxidized [2Fe-2S]-[ferredoxin] + 2 NH4(+) + 16 ADP + 16 phosphate + 6 H(+)</text>
        <dbReference type="Rhea" id="RHEA:21448"/>
        <dbReference type="Rhea" id="RHEA-COMP:10000"/>
        <dbReference type="Rhea" id="RHEA-COMP:10001"/>
        <dbReference type="ChEBI" id="CHEBI:15377"/>
        <dbReference type="ChEBI" id="CHEBI:15378"/>
        <dbReference type="ChEBI" id="CHEBI:17997"/>
        <dbReference type="ChEBI" id="CHEBI:18276"/>
        <dbReference type="ChEBI" id="CHEBI:28938"/>
        <dbReference type="ChEBI" id="CHEBI:30616"/>
        <dbReference type="ChEBI" id="CHEBI:33737"/>
        <dbReference type="ChEBI" id="CHEBI:33738"/>
        <dbReference type="ChEBI" id="CHEBI:43474"/>
        <dbReference type="ChEBI" id="CHEBI:456216"/>
        <dbReference type="EC" id="1.18.6.1"/>
    </reaction>
</comment>
<comment type="cofactor">
    <cofactor>
        <name>[8Fe-7S] cluster</name>
        <dbReference type="ChEBI" id="CHEBI:21143"/>
    </cofactor>
    <text>Binds 1 [8Fe-7S] cluster per heterodimer.</text>
</comment>
<comment type="activity regulation">
    <text evidence="2">Nitrogenase holoenzyme is subject to 'conformational protection' by FeSII; under oxidizing conditions FeSII binds to the holoenzyme and reversibly protects it from oxidation (PubMed:7830548).</text>
</comment>
<comment type="subunit">
    <text>Tetramer of two alpha and two beta chains. Forms complex with the iron protein (nitrogenase component 2).</text>
</comment>
<comment type="induction">
    <text evidence="2">Constitutively expressed during log and stationary phase in sucrose-limited cultures, its levels decrease during stationary phase (at protein level).</text>
</comment>
<comment type="similarity">
    <text evidence="3">Belongs to the NifD/NifK/NifE/NifN family.</text>
</comment>
<sequence length="523" mass="59460">MSQQVDKIKASYPLFLDQDYKDMLAKKRDGFEEKYPQDKIDEVFQWTTTKEYQELNFQREALTVNPAKACQPLGAVLCALGFEKTMPYVHGSQGCVAYFRSYFNRHFREPVSCVSDSMTEDAAVFGGQQNMKDGLQNCKATYKPDMIAVSTTCMAEVIGDDLNAFINNSKKEGFIPDEFPVPFAHTPSFVGSHVTGWDNMFEGIARYFTLKSMDDKVVGSNKKINIVPGFETYLGNFRVIKRMLSEMGVGYSLLSDPEEVLDTPADGQFRMYAGGTTQEEMKDAPNALNTVLLQPWHLEKTKKFVEGTWKHEVPKLNIPMGLDWTDEFLMKVSEISGQPIPASLTKERGRLVDMMTDSHTWLHGKRFALWGDPDFVMGLVKFLLELGCEPVHILCHNGNKRWKKAVDAILAASPYGKNATVYIGKDLWHLRSLVFTDKPDFMIGNSYGKFIQRDTLHKGKEFEVPLIRIGFPIFDRHHLHRSTTLGYEGAMQILTTLVNSILERLDEETRGMQATDYNHDLVR</sequence>
<dbReference type="EC" id="1.18.6.1"/>
<dbReference type="EMBL" id="M20568">
    <property type="protein sequence ID" value="AAA64711.1"/>
    <property type="molecule type" value="Genomic_DNA"/>
</dbReference>
<dbReference type="EMBL" id="M11579">
    <property type="protein sequence ID" value="AAA22144.1"/>
    <property type="molecule type" value="Genomic_DNA"/>
</dbReference>
<dbReference type="PIR" id="B43049">
    <property type="entry name" value="NIAVMB"/>
</dbReference>
<dbReference type="RefSeq" id="WP_012698833.1">
    <property type="nucleotide sequence ID" value="NZ_FPKM01000020.1"/>
</dbReference>
<dbReference type="PDB" id="1FP4">
    <property type="method" value="X-ray"/>
    <property type="resolution" value="2.50 A"/>
    <property type="chains" value="B/D=1-523"/>
</dbReference>
<dbReference type="PDB" id="1G20">
    <property type="method" value="X-ray"/>
    <property type="resolution" value="2.20 A"/>
    <property type="chains" value="B/D=1-523"/>
</dbReference>
<dbReference type="PDB" id="1G21">
    <property type="method" value="X-ray"/>
    <property type="resolution" value="3.00 A"/>
    <property type="chains" value="B/D=1-523"/>
</dbReference>
<dbReference type="PDB" id="1L5H">
    <property type="method" value="X-ray"/>
    <property type="resolution" value="2.30 A"/>
    <property type="chains" value="B=2-523"/>
</dbReference>
<dbReference type="PDB" id="1M1N">
    <property type="method" value="X-ray"/>
    <property type="resolution" value="1.16 A"/>
    <property type="chains" value="B/D/F/H=2-523"/>
</dbReference>
<dbReference type="PDB" id="1M1Y">
    <property type="method" value="X-ray"/>
    <property type="resolution" value="3.20 A"/>
    <property type="chains" value="B/D/J/L=2-523"/>
</dbReference>
<dbReference type="PDB" id="1M34">
    <property type="method" value="X-ray"/>
    <property type="resolution" value="2.30 A"/>
    <property type="chains" value="B/D/J/L=2-523"/>
</dbReference>
<dbReference type="PDB" id="1N2C">
    <property type="method" value="X-ray"/>
    <property type="resolution" value="3.00 A"/>
    <property type="chains" value="B/D=2-523"/>
</dbReference>
<dbReference type="PDB" id="2AFH">
    <property type="method" value="X-ray"/>
    <property type="resolution" value="2.10 A"/>
    <property type="chains" value="B/D=2-523"/>
</dbReference>
<dbReference type="PDB" id="2AFI">
    <property type="method" value="X-ray"/>
    <property type="resolution" value="3.10 A"/>
    <property type="chains" value="B/D/J/L=2-523"/>
</dbReference>
<dbReference type="PDB" id="2MIN">
    <property type="method" value="X-ray"/>
    <property type="resolution" value="2.03 A"/>
    <property type="chains" value="B/D=2-523"/>
</dbReference>
<dbReference type="PDB" id="3K1A">
    <property type="method" value="X-ray"/>
    <property type="resolution" value="2.23 A"/>
    <property type="chains" value="B/D=2-523"/>
</dbReference>
<dbReference type="PDB" id="3MIN">
    <property type="method" value="X-ray"/>
    <property type="resolution" value="2.03 A"/>
    <property type="chains" value="B/D=2-523"/>
</dbReference>
<dbReference type="PDB" id="3U7Q">
    <property type="method" value="X-ray"/>
    <property type="resolution" value="1.00 A"/>
    <property type="chains" value="B/D=1-523"/>
</dbReference>
<dbReference type="PDB" id="4ND8">
    <property type="method" value="X-ray"/>
    <property type="resolution" value="2.00 A"/>
    <property type="chains" value="B/D=1-523"/>
</dbReference>
<dbReference type="PDB" id="4TKU">
    <property type="method" value="X-ray"/>
    <property type="resolution" value="1.43 A"/>
    <property type="chains" value="B/D=1-523"/>
</dbReference>
<dbReference type="PDB" id="4TKV">
    <property type="method" value="X-ray"/>
    <property type="resolution" value="1.50 A"/>
    <property type="chains" value="B/D=1-523"/>
</dbReference>
<dbReference type="PDB" id="4WNA">
    <property type="method" value="X-ray"/>
    <property type="resolution" value="2.00 A"/>
    <property type="chains" value="B/D=1-523"/>
</dbReference>
<dbReference type="PDB" id="4WZA">
    <property type="method" value="X-ray"/>
    <property type="resolution" value="1.90 A"/>
    <property type="chains" value="B/D=2-523"/>
</dbReference>
<dbReference type="PDB" id="4WZB">
    <property type="method" value="X-ray"/>
    <property type="resolution" value="2.30 A"/>
    <property type="chains" value="B/D=2-523"/>
</dbReference>
<dbReference type="PDB" id="4XPI">
    <property type="method" value="X-ray"/>
    <property type="resolution" value="1.97 A"/>
    <property type="chains" value="B/D=2-523"/>
</dbReference>
<dbReference type="PDB" id="5BVG">
    <property type="method" value="X-ray"/>
    <property type="resolution" value="1.60 A"/>
    <property type="chains" value="B/D=1-523"/>
</dbReference>
<dbReference type="PDB" id="5BVH">
    <property type="method" value="X-ray"/>
    <property type="resolution" value="1.53 A"/>
    <property type="chains" value="B/D=1-523"/>
</dbReference>
<dbReference type="PDB" id="5CX1">
    <property type="method" value="X-ray"/>
    <property type="resolution" value="1.75 A"/>
    <property type="chains" value="B/D/F/H/J/L/N/P=1-523"/>
</dbReference>
<dbReference type="PDB" id="5VQ4">
    <property type="method" value="X-ray"/>
    <property type="resolution" value="2.30 A"/>
    <property type="chains" value="B/D=1-523"/>
</dbReference>
<dbReference type="PDB" id="6BBL">
    <property type="method" value="X-ray"/>
    <property type="resolution" value="1.68 A"/>
    <property type="chains" value="B/D=1-523"/>
</dbReference>
<dbReference type="PDB" id="6CDK">
    <property type="method" value="X-ray"/>
    <property type="resolution" value="2.10 A"/>
    <property type="chains" value="B/D=1-523"/>
</dbReference>
<dbReference type="PDB" id="6O7L">
    <property type="method" value="X-ray"/>
    <property type="resolution" value="2.26 A"/>
    <property type="chains" value="B/D=1-523"/>
</dbReference>
<dbReference type="PDB" id="6O7M">
    <property type="method" value="X-ray"/>
    <property type="resolution" value="1.40 A"/>
    <property type="chains" value="B/D=1-523"/>
</dbReference>
<dbReference type="PDB" id="6O7N">
    <property type="method" value="X-ray"/>
    <property type="resolution" value="1.75 A"/>
    <property type="chains" value="B/D=1-523"/>
</dbReference>
<dbReference type="PDB" id="6O7O">
    <property type="method" value="X-ray"/>
    <property type="resolution" value="1.89 A"/>
    <property type="chains" value="B/D=1-523"/>
</dbReference>
<dbReference type="PDB" id="6O7P">
    <property type="method" value="X-ray"/>
    <property type="resolution" value="1.70 A"/>
    <property type="chains" value="B/D=1-523"/>
</dbReference>
<dbReference type="PDB" id="6O7Q">
    <property type="method" value="X-ray"/>
    <property type="resolution" value="2.00 A"/>
    <property type="chains" value="B/D=1-523"/>
</dbReference>
<dbReference type="PDB" id="6O7R">
    <property type="method" value="X-ray"/>
    <property type="resolution" value="2.27 A"/>
    <property type="chains" value="B/D=1-523"/>
</dbReference>
<dbReference type="PDB" id="6O7S">
    <property type="method" value="X-ray"/>
    <property type="resolution" value="2.27 A"/>
    <property type="chains" value="B/D=1-523"/>
</dbReference>
<dbReference type="PDB" id="6OP1">
    <property type="method" value="X-ray"/>
    <property type="resolution" value="1.70 A"/>
    <property type="chains" value="B/D=2-523"/>
</dbReference>
<dbReference type="PDB" id="6OP2">
    <property type="method" value="X-ray"/>
    <property type="resolution" value="1.90 A"/>
    <property type="chains" value="B/D=2-523"/>
</dbReference>
<dbReference type="PDB" id="6OP3">
    <property type="method" value="X-ray"/>
    <property type="resolution" value="1.60 A"/>
    <property type="chains" value="B/D=2-523"/>
</dbReference>
<dbReference type="PDB" id="6OP4">
    <property type="method" value="X-ray"/>
    <property type="resolution" value="2.30 A"/>
    <property type="chains" value="B/D=2-523"/>
</dbReference>
<dbReference type="PDB" id="6UG0">
    <property type="method" value="X-ray"/>
    <property type="resolution" value="1.83 A"/>
    <property type="chains" value="B/D=1-523"/>
</dbReference>
<dbReference type="PDB" id="6VXT">
    <property type="method" value="X-ray"/>
    <property type="resolution" value="1.74 A"/>
    <property type="chains" value="B/D=1-523"/>
</dbReference>
<dbReference type="PDB" id="7JRF">
    <property type="method" value="X-ray"/>
    <property type="resolution" value="1.33 A"/>
    <property type="chains" value="B/D=1-523"/>
</dbReference>
<dbReference type="PDB" id="7MCI">
    <property type="method" value="X-ray"/>
    <property type="resolution" value="1.65 A"/>
    <property type="chains" value="B/D=1-523"/>
</dbReference>
<dbReference type="PDB" id="7UT6">
    <property type="method" value="EM"/>
    <property type="resolution" value="1.91 A"/>
    <property type="chains" value="B/D=1-523"/>
</dbReference>
<dbReference type="PDB" id="7UT7">
    <property type="method" value="EM"/>
    <property type="resolution" value="1.91 A"/>
    <property type="chains" value="B/D=1-523"/>
</dbReference>
<dbReference type="PDB" id="7UT8">
    <property type="method" value="EM"/>
    <property type="resolution" value="2.43 A"/>
    <property type="chains" value="B/D=1-523"/>
</dbReference>
<dbReference type="PDB" id="7UT9">
    <property type="method" value="EM"/>
    <property type="resolution" value="2.44 A"/>
    <property type="chains" value="B/D=1-523"/>
</dbReference>
<dbReference type="PDB" id="7UTA">
    <property type="method" value="EM"/>
    <property type="resolution" value="2.40 A"/>
    <property type="chains" value="B/D=1-523"/>
</dbReference>
<dbReference type="PDB" id="8BTS">
    <property type="method" value="X-ray"/>
    <property type="resolution" value="3.03 A"/>
    <property type="chains" value="B/D/I/L=1-523"/>
</dbReference>
<dbReference type="PDB" id="8CRS">
    <property type="method" value="EM"/>
    <property type="resolution" value="2.04 A"/>
    <property type="chains" value="B/D=2-523"/>
</dbReference>
<dbReference type="PDB" id="8DBX">
    <property type="method" value="EM"/>
    <property type="resolution" value="1.92 A"/>
    <property type="chains" value="B/D=1-523"/>
</dbReference>
<dbReference type="PDB" id="8DBY">
    <property type="method" value="EM"/>
    <property type="resolution" value="2.26 A"/>
    <property type="chains" value="B/D=1-523"/>
</dbReference>
<dbReference type="PDB" id="8DFC">
    <property type="method" value="EM"/>
    <property type="resolution" value="2.48 A"/>
    <property type="chains" value="B/D=1-523"/>
</dbReference>
<dbReference type="PDB" id="8DFD">
    <property type="method" value="EM"/>
    <property type="resolution" value="2.12 A"/>
    <property type="chains" value="B/D=1-523"/>
</dbReference>
<dbReference type="PDB" id="8DPN">
    <property type="method" value="EM"/>
    <property type="resolution" value="2.49 A"/>
    <property type="chains" value="B/D=1-523"/>
</dbReference>
<dbReference type="PDB" id="8E3T">
    <property type="method" value="X-ray"/>
    <property type="resolution" value="2.20 A"/>
    <property type="chains" value="B/D=1-523"/>
</dbReference>
<dbReference type="PDB" id="8E3U">
    <property type="method" value="X-ray"/>
    <property type="resolution" value="1.99 A"/>
    <property type="chains" value="B/D=1-523"/>
</dbReference>
<dbReference type="PDB" id="8E3V">
    <property type="method" value="X-ray"/>
    <property type="resolution" value="2.00 A"/>
    <property type="chains" value="B/D=1-523"/>
</dbReference>
<dbReference type="PDB" id="8ENL">
    <property type="method" value="EM"/>
    <property type="resolution" value="2.37 A"/>
    <property type="chains" value="B/D=2-523"/>
</dbReference>
<dbReference type="PDB" id="8ENM">
    <property type="method" value="EM"/>
    <property type="resolution" value="2.14 A"/>
    <property type="chains" value="B/D=1-523"/>
</dbReference>
<dbReference type="PDB" id="8ENN">
    <property type="method" value="EM"/>
    <property type="resolution" value="2.58 A"/>
    <property type="chains" value="B/D=2-523"/>
</dbReference>
<dbReference type="PDB" id="8ENO">
    <property type="method" value="EM"/>
    <property type="resolution" value="2.71 A"/>
    <property type="chains" value="B/D=2-523"/>
</dbReference>
<dbReference type="PDB" id="8P8G">
    <property type="method" value="X-ray"/>
    <property type="resolution" value="1.55 A"/>
    <property type="chains" value="B/D=1-523"/>
</dbReference>
<dbReference type="PDB" id="8RHP">
    <property type="method" value="EM"/>
    <property type="resolution" value="2.89 A"/>
    <property type="chains" value="B/C/I/J=1-523"/>
</dbReference>
<dbReference type="PDB" id="9CJB">
    <property type="method" value="EM"/>
    <property type="resolution" value="1.97 A"/>
    <property type="chains" value="B/D=1-523"/>
</dbReference>
<dbReference type="PDB" id="9CJC">
    <property type="method" value="EM"/>
    <property type="resolution" value="2.04 A"/>
    <property type="chains" value="B/D=1-523"/>
</dbReference>
<dbReference type="PDB" id="9CJD">
    <property type="method" value="EM"/>
    <property type="resolution" value="1.92 A"/>
    <property type="chains" value="B/D=1-523"/>
</dbReference>
<dbReference type="PDB" id="9CJE">
    <property type="method" value="EM"/>
    <property type="resolution" value="2.22 A"/>
    <property type="chains" value="B/D=1-523"/>
</dbReference>
<dbReference type="PDB" id="9CJF">
    <property type="method" value="EM"/>
    <property type="resolution" value="2.33 A"/>
    <property type="chains" value="B/D=1-523"/>
</dbReference>
<dbReference type="PDB" id="9CTZ">
    <property type="method" value="EM"/>
    <property type="resolution" value="2.67 A"/>
    <property type="chains" value="B/D=1-523"/>
</dbReference>
<dbReference type="PDB" id="9CU0">
    <property type="method" value="EM"/>
    <property type="resolution" value="3.94 A"/>
    <property type="chains" value="B/D=1-523"/>
</dbReference>
<dbReference type="PDB" id="9CU1">
    <property type="method" value="EM"/>
    <property type="resolution" value="2.83 A"/>
    <property type="chains" value="B/D/I/K=1-523"/>
</dbReference>
<dbReference type="PDB" id="9CU2">
    <property type="method" value="EM"/>
    <property type="resolution" value="2.27 A"/>
    <property type="chains" value="B/D/I/K=1-523"/>
</dbReference>
<dbReference type="PDBsum" id="1FP4"/>
<dbReference type="PDBsum" id="1G20"/>
<dbReference type="PDBsum" id="1G21"/>
<dbReference type="PDBsum" id="1L5H"/>
<dbReference type="PDBsum" id="1M1N"/>
<dbReference type="PDBsum" id="1M1Y"/>
<dbReference type="PDBsum" id="1M34"/>
<dbReference type="PDBsum" id="1N2C"/>
<dbReference type="PDBsum" id="2AFH"/>
<dbReference type="PDBsum" id="2AFI"/>
<dbReference type="PDBsum" id="2MIN"/>
<dbReference type="PDBsum" id="3K1A"/>
<dbReference type="PDBsum" id="3MIN"/>
<dbReference type="PDBsum" id="3U7Q"/>
<dbReference type="PDBsum" id="4ND8"/>
<dbReference type="PDBsum" id="4TKU"/>
<dbReference type="PDBsum" id="4TKV"/>
<dbReference type="PDBsum" id="4WNA"/>
<dbReference type="PDBsum" id="4WZA"/>
<dbReference type="PDBsum" id="4WZB"/>
<dbReference type="PDBsum" id="4XPI"/>
<dbReference type="PDBsum" id="5BVG"/>
<dbReference type="PDBsum" id="5BVH"/>
<dbReference type="PDBsum" id="5CX1"/>
<dbReference type="PDBsum" id="5VQ4"/>
<dbReference type="PDBsum" id="6BBL"/>
<dbReference type="PDBsum" id="6CDK"/>
<dbReference type="PDBsum" id="6O7L"/>
<dbReference type="PDBsum" id="6O7M"/>
<dbReference type="PDBsum" id="6O7N"/>
<dbReference type="PDBsum" id="6O7O"/>
<dbReference type="PDBsum" id="6O7P"/>
<dbReference type="PDBsum" id="6O7Q"/>
<dbReference type="PDBsum" id="6O7R"/>
<dbReference type="PDBsum" id="6O7S"/>
<dbReference type="PDBsum" id="6OP1"/>
<dbReference type="PDBsum" id="6OP2"/>
<dbReference type="PDBsum" id="6OP3"/>
<dbReference type="PDBsum" id="6OP4"/>
<dbReference type="PDBsum" id="6UG0"/>
<dbReference type="PDBsum" id="6VXT"/>
<dbReference type="PDBsum" id="7JRF"/>
<dbReference type="PDBsum" id="7MCI"/>
<dbReference type="PDBsum" id="7UT6"/>
<dbReference type="PDBsum" id="7UT7"/>
<dbReference type="PDBsum" id="7UT8"/>
<dbReference type="PDBsum" id="7UT9"/>
<dbReference type="PDBsum" id="7UTA"/>
<dbReference type="PDBsum" id="8BTS"/>
<dbReference type="PDBsum" id="8CRS"/>
<dbReference type="PDBsum" id="8DBX"/>
<dbReference type="PDBsum" id="8DBY"/>
<dbReference type="PDBsum" id="8DFC"/>
<dbReference type="PDBsum" id="8DFD"/>
<dbReference type="PDBsum" id="8DPN"/>
<dbReference type="PDBsum" id="8E3T"/>
<dbReference type="PDBsum" id="8E3U"/>
<dbReference type="PDBsum" id="8E3V"/>
<dbReference type="PDBsum" id="8ENL"/>
<dbReference type="PDBsum" id="8ENM"/>
<dbReference type="PDBsum" id="8ENN"/>
<dbReference type="PDBsum" id="8ENO"/>
<dbReference type="PDBsum" id="8P8G"/>
<dbReference type="PDBsum" id="8RHP"/>
<dbReference type="PDBsum" id="9CJB"/>
<dbReference type="PDBsum" id="9CJC"/>
<dbReference type="PDBsum" id="9CJD"/>
<dbReference type="PDBsum" id="9CJE"/>
<dbReference type="PDBsum" id="9CJF"/>
<dbReference type="PDBsum" id="9CTZ"/>
<dbReference type="PDBsum" id="9CU0"/>
<dbReference type="PDBsum" id="9CU1"/>
<dbReference type="PDBsum" id="9CU2"/>
<dbReference type="EMDB" id="EMD-19178"/>
<dbReference type="EMDB" id="EMD-26957"/>
<dbReference type="EMDB" id="EMD-27316"/>
<dbReference type="EMDB" id="EMD-27317"/>
<dbReference type="EMDB" id="EMD-27404"/>
<dbReference type="EMDB" id="EMD-27405"/>
<dbReference type="EMDB" id="EMD-28272"/>
<dbReference type="EMDB" id="EMD-28273"/>
<dbReference type="EMDB" id="EMD-45626"/>
<dbReference type="EMDB" id="EMD-45627"/>
<dbReference type="EMDB" id="EMD-45628"/>
<dbReference type="EMDB" id="EMD-45629"/>
<dbReference type="EMDB" id="EMD-45630"/>
<dbReference type="EMDB" id="EMD-45923"/>
<dbReference type="EMDB" id="EMD-45924"/>
<dbReference type="EMDB" id="EMD-45925"/>
<dbReference type="EMDB" id="EMD-45926"/>
<dbReference type="SMR" id="P07329"/>
<dbReference type="GeneID" id="88183607"/>
<dbReference type="OMA" id="CCAYHRS"/>
<dbReference type="BioCyc" id="MetaCyc:MONOMER-19494"/>
<dbReference type="BRENDA" id="1.18.6.1">
    <property type="organism ID" value="49"/>
</dbReference>
<dbReference type="EvolutionaryTrace" id="P07329"/>
<dbReference type="GO" id="GO:0016612">
    <property type="term" value="C:molybdenum-iron nitrogenase complex"/>
    <property type="evidence" value="ECO:0007669"/>
    <property type="project" value="InterPro"/>
</dbReference>
<dbReference type="GO" id="GO:0005524">
    <property type="term" value="F:ATP binding"/>
    <property type="evidence" value="ECO:0007669"/>
    <property type="project" value="UniProtKB-KW"/>
</dbReference>
<dbReference type="GO" id="GO:0051536">
    <property type="term" value="F:iron-sulfur cluster binding"/>
    <property type="evidence" value="ECO:0007669"/>
    <property type="project" value="UniProtKB-KW"/>
</dbReference>
<dbReference type="GO" id="GO:0046872">
    <property type="term" value="F:metal ion binding"/>
    <property type="evidence" value="ECO:0007669"/>
    <property type="project" value="UniProtKB-KW"/>
</dbReference>
<dbReference type="GO" id="GO:0016163">
    <property type="term" value="F:nitrogenase activity"/>
    <property type="evidence" value="ECO:0007669"/>
    <property type="project" value="UniProtKB-EC"/>
</dbReference>
<dbReference type="GO" id="GO:0009399">
    <property type="term" value="P:nitrogen fixation"/>
    <property type="evidence" value="ECO:0000315"/>
    <property type="project" value="CACAO"/>
</dbReference>
<dbReference type="CDD" id="cd01974">
    <property type="entry name" value="Nitrogenase_MoFe_beta"/>
    <property type="match status" value="1"/>
</dbReference>
<dbReference type="FunFam" id="3.40.50.1980:FF:000046">
    <property type="entry name" value="Nitrogenase molybdenum-iron protein beta chain"/>
    <property type="match status" value="1"/>
</dbReference>
<dbReference type="FunFam" id="3.40.50.1980:FF:000054">
    <property type="entry name" value="Nitrogenase molybdenum-iron protein beta chain"/>
    <property type="match status" value="1"/>
</dbReference>
<dbReference type="FunFam" id="3.40.50.1980:FF:000093">
    <property type="entry name" value="Nitrogenase molybdenum-iron protein beta chain"/>
    <property type="match status" value="1"/>
</dbReference>
<dbReference type="Gene3D" id="3.40.50.1980">
    <property type="entry name" value="Nitrogenase molybdenum iron protein domain"/>
    <property type="match status" value="3"/>
</dbReference>
<dbReference type="Gene3D" id="1.20.89.10">
    <property type="entry name" value="Nitrogenase Molybdenum-iron Protein, subunit B, domain 4"/>
    <property type="match status" value="1"/>
</dbReference>
<dbReference type="InterPro" id="IPR050152">
    <property type="entry name" value="ChlB/BchB/BchZ"/>
</dbReference>
<dbReference type="InterPro" id="IPR000510">
    <property type="entry name" value="Nase/OxRdtase_comp1"/>
</dbReference>
<dbReference type="InterPro" id="IPR000318">
    <property type="entry name" value="Nase_comp1_CS"/>
</dbReference>
<dbReference type="InterPro" id="IPR005976">
    <property type="entry name" value="Nase_Mo-Fe_CF_bsu"/>
</dbReference>
<dbReference type="InterPro" id="IPR024564">
    <property type="entry name" value="Nase_Mo-Fe_CF_bsu_N"/>
</dbReference>
<dbReference type="NCBIfam" id="TIGR01286">
    <property type="entry name" value="nifK"/>
    <property type="match status" value="1"/>
</dbReference>
<dbReference type="PANTHER" id="PTHR33712">
    <property type="entry name" value="LIGHT-INDEPENDENT PROTOCHLOROPHYLLIDE REDUCTASE SUBUNIT B"/>
    <property type="match status" value="1"/>
</dbReference>
<dbReference type="PANTHER" id="PTHR33712:SF7">
    <property type="entry name" value="LIGHT-INDEPENDENT PROTOCHLOROPHYLLIDE REDUCTASE SUBUNIT B"/>
    <property type="match status" value="1"/>
</dbReference>
<dbReference type="Pfam" id="PF11844">
    <property type="entry name" value="DUF3364"/>
    <property type="match status" value="1"/>
</dbReference>
<dbReference type="Pfam" id="PF00148">
    <property type="entry name" value="Oxidored_nitro"/>
    <property type="match status" value="1"/>
</dbReference>
<dbReference type="SUPFAM" id="SSF53807">
    <property type="entry name" value="Helical backbone' metal receptor"/>
    <property type="match status" value="1"/>
</dbReference>
<dbReference type="PROSITE" id="PS00699">
    <property type="entry name" value="NITROGENASE_1_1"/>
    <property type="match status" value="1"/>
</dbReference>
<dbReference type="PROSITE" id="PS00090">
    <property type="entry name" value="NITROGENASE_1_2"/>
    <property type="match status" value="1"/>
</dbReference>
<keyword id="KW-0002">3D-structure</keyword>
<keyword id="KW-0067">ATP-binding</keyword>
<keyword id="KW-0903">Direct protein sequencing</keyword>
<keyword id="KW-0408">Iron</keyword>
<keyword id="KW-0411">Iron-sulfur</keyword>
<keyword id="KW-0479">Metal-binding</keyword>
<keyword id="KW-0535">Nitrogen fixation</keyword>
<keyword id="KW-0547">Nucleotide-binding</keyword>
<keyword id="KW-0560">Oxidoreductase</keyword>